<accession>A9MJY3</accession>
<comment type="function">
    <text evidence="1">O-methyltransferase that catalyzes the 2 O-methylation steps in the ubiquinone biosynthetic pathway.</text>
</comment>
<comment type="catalytic activity">
    <reaction evidence="1">
        <text>a 3-demethylubiquinol + S-adenosyl-L-methionine = a ubiquinol + S-adenosyl-L-homocysteine + H(+)</text>
        <dbReference type="Rhea" id="RHEA:44380"/>
        <dbReference type="Rhea" id="RHEA-COMP:9566"/>
        <dbReference type="Rhea" id="RHEA-COMP:10914"/>
        <dbReference type="ChEBI" id="CHEBI:15378"/>
        <dbReference type="ChEBI" id="CHEBI:17976"/>
        <dbReference type="ChEBI" id="CHEBI:57856"/>
        <dbReference type="ChEBI" id="CHEBI:59789"/>
        <dbReference type="ChEBI" id="CHEBI:84422"/>
        <dbReference type="EC" id="2.1.1.64"/>
    </reaction>
</comment>
<comment type="catalytic activity">
    <reaction evidence="1">
        <text>a 3-(all-trans-polyprenyl)benzene-1,2-diol + S-adenosyl-L-methionine = a 2-methoxy-6-(all-trans-polyprenyl)phenol + S-adenosyl-L-homocysteine + H(+)</text>
        <dbReference type="Rhea" id="RHEA:31411"/>
        <dbReference type="Rhea" id="RHEA-COMP:9550"/>
        <dbReference type="Rhea" id="RHEA-COMP:9551"/>
        <dbReference type="ChEBI" id="CHEBI:15378"/>
        <dbReference type="ChEBI" id="CHEBI:57856"/>
        <dbReference type="ChEBI" id="CHEBI:59789"/>
        <dbReference type="ChEBI" id="CHEBI:62729"/>
        <dbReference type="ChEBI" id="CHEBI:62731"/>
        <dbReference type="EC" id="2.1.1.222"/>
    </reaction>
</comment>
<comment type="pathway">
    <text evidence="1">Cofactor biosynthesis; ubiquinone biosynthesis.</text>
</comment>
<comment type="similarity">
    <text evidence="1">Belongs to the methyltransferase superfamily. UbiG/COQ3 family.</text>
</comment>
<protein>
    <recommendedName>
        <fullName evidence="1">Ubiquinone biosynthesis O-methyltransferase</fullName>
    </recommendedName>
    <alternativeName>
        <fullName evidence="1">2-polyprenyl-6-hydroxyphenol methylase</fullName>
        <ecNumber evidence="1">2.1.1.222</ecNumber>
    </alternativeName>
    <alternativeName>
        <fullName evidence="1">3-demethylubiquinone 3-O-methyltransferase</fullName>
        <ecNumber evidence="1">2.1.1.64</ecNumber>
    </alternativeName>
</protein>
<name>UBIG_SALAR</name>
<dbReference type="EC" id="2.1.1.222" evidence="1"/>
<dbReference type="EC" id="2.1.1.64" evidence="1"/>
<dbReference type="EMBL" id="CP000880">
    <property type="protein sequence ID" value="ABX20542.1"/>
    <property type="molecule type" value="Genomic_DNA"/>
</dbReference>
<dbReference type="SMR" id="A9MJY3"/>
<dbReference type="STRING" id="41514.SARI_00616"/>
<dbReference type="KEGG" id="ses:SARI_00616"/>
<dbReference type="HOGENOM" id="CLU_042432_5_0_6"/>
<dbReference type="UniPathway" id="UPA00232"/>
<dbReference type="Proteomes" id="UP000002084">
    <property type="component" value="Chromosome"/>
</dbReference>
<dbReference type="GO" id="GO:0102208">
    <property type="term" value="F:2-polyprenyl-6-hydroxyphenol methylase activity"/>
    <property type="evidence" value="ECO:0007669"/>
    <property type="project" value="UniProtKB-EC"/>
</dbReference>
<dbReference type="GO" id="GO:0061542">
    <property type="term" value="F:3-demethylubiquinol 3-O-methyltransferase activity"/>
    <property type="evidence" value="ECO:0007669"/>
    <property type="project" value="UniProtKB-UniRule"/>
</dbReference>
<dbReference type="GO" id="GO:0010420">
    <property type="term" value="F:polyprenyldihydroxybenzoate methyltransferase activity"/>
    <property type="evidence" value="ECO:0007669"/>
    <property type="project" value="InterPro"/>
</dbReference>
<dbReference type="GO" id="GO:0032259">
    <property type="term" value="P:methylation"/>
    <property type="evidence" value="ECO:0007669"/>
    <property type="project" value="UniProtKB-KW"/>
</dbReference>
<dbReference type="CDD" id="cd02440">
    <property type="entry name" value="AdoMet_MTases"/>
    <property type="match status" value="1"/>
</dbReference>
<dbReference type="FunFam" id="3.40.50.150:FF:000028">
    <property type="entry name" value="Ubiquinone biosynthesis O-methyltransferase"/>
    <property type="match status" value="1"/>
</dbReference>
<dbReference type="Gene3D" id="3.40.50.150">
    <property type="entry name" value="Vaccinia Virus protein VP39"/>
    <property type="match status" value="1"/>
</dbReference>
<dbReference type="HAMAP" id="MF_00472">
    <property type="entry name" value="UbiG"/>
    <property type="match status" value="1"/>
</dbReference>
<dbReference type="InterPro" id="IPR029063">
    <property type="entry name" value="SAM-dependent_MTases_sf"/>
</dbReference>
<dbReference type="InterPro" id="IPR010233">
    <property type="entry name" value="UbiG_MeTrfase"/>
</dbReference>
<dbReference type="NCBIfam" id="TIGR01983">
    <property type="entry name" value="UbiG"/>
    <property type="match status" value="1"/>
</dbReference>
<dbReference type="PANTHER" id="PTHR43464">
    <property type="entry name" value="METHYLTRANSFERASE"/>
    <property type="match status" value="1"/>
</dbReference>
<dbReference type="PANTHER" id="PTHR43464:SF19">
    <property type="entry name" value="UBIQUINONE BIOSYNTHESIS O-METHYLTRANSFERASE, MITOCHONDRIAL"/>
    <property type="match status" value="1"/>
</dbReference>
<dbReference type="Pfam" id="PF13489">
    <property type="entry name" value="Methyltransf_23"/>
    <property type="match status" value="1"/>
</dbReference>
<dbReference type="SUPFAM" id="SSF53335">
    <property type="entry name" value="S-adenosyl-L-methionine-dependent methyltransferases"/>
    <property type="match status" value="1"/>
</dbReference>
<gene>
    <name evidence="1" type="primary">ubiG</name>
    <name type="ordered locus">SARI_00616</name>
</gene>
<reference key="1">
    <citation type="submission" date="2007-11" db="EMBL/GenBank/DDBJ databases">
        <authorList>
            <consortium name="The Salmonella enterica serovar Arizonae Genome Sequencing Project"/>
            <person name="McClelland M."/>
            <person name="Sanderson E.K."/>
            <person name="Porwollik S."/>
            <person name="Spieth J."/>
            <person name="Clifton W.S."/>
            <person name="Fulton R."/>
            <person name="Chunyan W."/>
            <person name="Wollam A."/>
            <person name="Shah N."/>
            <person name="Pepin K."/>
            <person name="Bhonagiri V."/>
            <person name="Nash W."/>
            <person name="Johnson M."/>
            <person name="Thiruvilangam P."/>
            <person name="Wilson R."/>
        </authorList>
    </citation>
    <scope>NUCLEOTIDE SEQUENCE [LARGE SCALE GENOMIC DNA]</scope>
    <source>
        <strain>ATCC BAA-731 / CDC346-86 / RSK2980</strain>
    </source>
</reference>
<proteinExistence type="inferred from homology"/>
<evidence type="ECO:0000255" key="1">
    <source>
        <dbReference type="HAMAP-Rule" id="MF_00472"/>
    </source>
</evidence>
<organism>
    <name type="scientific">Salmonella arizonae (strain ATCC BAA-731 / CDC346-86 / RSK2980)</name>
    <dbReference type="NCBI Taxonomy" id="41514"/>
    <lineage>
        <taxon>Bacteria</taxon>
        <taxon>Pseudomonadati</taxon>
        <taxon>Pseudomonadota</taxon>
        <taxon>Gammaproteobacteria</taxon>
        <taxon>Enterobacterales</taxon>
        <taxon>Enterobacteriaceae</taxon>
        <taxon>Salmonella</taxon>
    </lineage>
</organism>
<sequence>MNAEKAPERHNVDHEEIAKFEAVASRWWDLEGEFKPLHRINPLRLGYIAERSGGLFGKKVLDVGCGGGILAESMAREGATVTGLDMGFEPLQVARLHALESGIEVEYVQETVEEHAAKHAQQYDVVTCMEMLEHVPDPQSVVHACAQLVKPGGEVFFSTLNRNGKSWLMAVVGAEYILRMVPKGTHDVKKFIKPAELLSWVDETILKEQHITGLHYNPITNTFKLGPGVDVNYMLHTRAKKA</sequence>
<keyword id="KW-0489">Methyltransferase</keyword>
<keyword id="KW-1185">Reference proteome</keyword>
<keyword id="KW-0949">S-adenosyl-L-methionine</keyword>
<keyword id="KW-0808">Transferase</keyword>
<keyword id="KW-0831">Ubiquinone biosynthesis</keyword>
<feature type="chain" id="PRO_1000081224" description="Ubiquinone biosynthesis O-methyltransferase">
    <location>
        <begin position="1"/>
        <end position="242"/>
    </location>
</feature>
<feature type="binding site" evidence="1">
    <location>
        <position position="44"/>
    </location>
    <ligand>
        <name>S-adenosyl-L-methionine</name>
        <dbReference type="ChEBI" id="CHEBI:59789"/>
    </ligand>
</feature>
<feature type="binding site" evidence="1">
    <location>
        <position position="64"/>
    </location>
    <ligand>
        <name>S-adenosyl-L-methionine</name>
        <dbReference type="ChEBI" id="CHEBI:59789"/>
    </ligand>
</feature>
<feature type="binding site" evidence="1">
    <location>
        <position position="85"/>
    </location>
    <ligand>
        <name>S-adenosyl-L-methionine</name>
        <dbReference type="ChEBI" id="CHEBI:59789"/>
    </ligand>
</feature>
<feature type="binding site" evidence="1">
    <location>
        <position position="129"/>
    </location>
    <ligand>
        <name>S-adenosyl-L-methionine</name>
        <dbReference type="ChEBI" id="CHEBI:59789"/>
    </ligand>
</feature>